<protein>
    <recommendedName>
        <fullName evidence="1">Translation initiation factor 6</fullName>
        <shortName evidence="1">aIF-6</shortName>
    </recommendedName>
</protein>
<gene>
    <name evidence="1" type="primary">eif6</name>
    <name type="ordered locus">MMP0061</name>
</gene>
<dbReference type="EMBL" id="BX950229">
    <property type="protein sequence ID" value="CAF29617.1"/>
    <property type="molecule type" value="Genomic_DNA"/>
</dbReference>
<dbReference type="RefSeq" id="WP_011170005.1">
    <property type="nucleotide sequence ID" value="NC_005791.1"/>
</dbReference>
<dbReference type="SMR" id="Q6M156"/>
<dbReference type="STRING" id="267377.MMP0061"/>
<dbReference type="EnsemblBacteria" id="CAF29617">
    <property type="protein sequence ID" value="CAF29617"/>
    <property type="gene ID" value="MMP0061"/>
</dbReference>
<dbReference type="KEGG" id="mmp:MMP0061"/>
<dbReference type="PATRIC" id="fig|267377.15.peg.62"/>
<dbReference type="eggNOG" id="arCOG04176">
    <property type="taxonomic scope" value="Archaea"/>
</dbReference>
<dbReference type="HOGENOM" id="CLU_071894_1_0_2"/>
<dbReference type="OrthoDB" id="33582at2157"/>
<dbReference type="Proteomes" id="UP000000590">
    <property type="component" value="Chromosome"/>
</dbReference>
<dbReference type="GO" id="GO:0043022">
    <property type="term" value="F:ribosome binding"/>
    <property type="evidence" value="ECO:0007669"/>
    <property type="project" value="InterPro"/>
</dbReference>
<dbReference type="GO" id="GO:0003743">
    <property type="term" value="F:translation initiation factor activity"/>
    <property type="evidence" value="ECO:0007669"/>
    <property type="project" value="UniProtKB-UniRule"/>
</dbReference>
<dbReference type="GO" id="GO:0042256">
    <property type="term" value="P:cytosolic ribosome assembly"/>
    <property type="evidence" value="ECO:0007669"/>
    <property type="project" value="InterPro"/>
</dbReference>
<dbReference type="Gene3D" id="3.75.10.10">
    <property type="entry name" value="L-arginine/glycine Amidinotransferase, Chain A"/>
    <property type="match status" value="1"/>
</dbReference>
<dbReference type="HAMAP" id="MF_00032">
    <property type="entry name" value="eIF_6"/>
    <property type="match status" value="1"/>
</dbReference>
<dbReference type="InterPro" id="IPR002769">
    <property type="entry name" value="eIF6"/>
</dbReference>
<dbReference type="NCBIfam" id="TIGR00323">
    <property type="entry name" value="eIF-6"/>
    <property type="match status" value="1"/>
</dbReference>
<dbReference type="NCBIfam" id="NF003127">
    <property type="entry name" value="PRK04046.1-3"/>
    <property type="match status" value="1"/>
</dbReference>
<dbReference type="PANTHER" id="PTHR10784">
    <property type="entry name" value="TRANSLATION INITIATION FACTOR 6"/>
    <property type="match status" value="1"/>
</dbReference>
<dbReference type="Pfam" id="PF01912">
    <property type="entry name" value="eIF-6"/>
    <property type="match status" value="1"/>
</dbReference>
<dbReference type="PIRSF" id="PIRSF006413">
    <property type="entry name" value="IF-6"/>
    <property type="match status" value="1"/>
</dbReference>
<dbReference type="SMART" id="SM00654">
    <property type="entry name" value="eIF6"/>
    <property type="match status" value="1"/>
</dbReference>
<dbReference type="SUPFAM" id="SSF55909">
    <property type="entry name" value="Pentein"/>
    <property type="match status" value="1"/>
</dbReference>
<accession>Q6M156</accession>
<organism>
    <name type="scientific">Methanococcus maripaludis (strain DSM 14266 / JCM 13030 / NBRC 101832 / S2 / LL)</name>
    <dbReference type="NCBI Taxonomy" id="267377"/>
    <lineage>
        <taxon>Archaea</taxon>
        <taxon>Methanobacteriati</taxon>
        <taxon>Methanobacteriota</taxon>
        <taxon>Methanomada group</taxon>
        <taxon>Methanococci</taxon>
        <taxon>Methanococcales</taxon>
        <taxon>Methanococcaceae</taxon>
        <taxon>Methanococcus</taxon>
    </lineage>
</organism>
<name>IF6_METMP</name>
<reference key="1">
    <citation type="journal article" date="2004" name="J. Bacteriol.">
        <title>Complete genome sequence of the genetically tractable hydrogenotrophic methanogen Methanococcus maripaludis.</title>
        <authorList>
            <person name="Hendrickson E.L."/>
            <person name="Kaul R."/>
            <person name="Zhou Y."/>
            <person name="Bovee D."/>
            <person name="Chapman P."/>
            <person name="Chung J."/>
            <person name="Conway de Macario E."/>
            <person name="Dodsworth J.A."/>
            <person name="Gillett W."/>
            <person name="Graham D.E."/>
            <person name="Hackett M."/>
            <person name="Haydock A.K."/>
            <person name="Kang A."/>
            <person name="Land M.L."/>
            <person name="Levy R."/>
            <person name="Lie T.J."/>
            <person name="Major T.A."/>
            <person name="Moore B.C."/>
            <person name="Porat I."/>
            <person name="Palmeiri A."/>
            <person name="Rouse G."/>
            <person name="Saenphimmachak C."/>
            <person name="Soell D."/>
            <person name="Van Dien S."/>
            <person name="Wang T."/>
            <person name="Whitman W.B."/>
            <person name="Xia Q."/>
            <person name="Zhang Y."/>
            <person name="Larimer F.W."/>
            <person name="Olson M.V."/>
            <person name="Leigh J.A."/>
        </authorList>
    </citation>
    <scope>NUCLEOTIDE SEQUENCE [LARGE SCALE GENOMIC DNA]</scope>
    <source>
        <strain>DSM 14266 / JCM 13030 / NBRC 101832 / S2 / LL</strain>
    </source>
</reference>
<proteinExistence type="inferred from homology"/>
<keyword id="KW-0396">Initiation factor</keyword>
<keyword id="KW-0648">Protein biosynthesis</keyword>
<keyword id="KW-1185">Reference proteome</keyword>
<evidence type="ECO:0000255" key="1">
    <source>
        <dbReference type="HAMAP-Rule" id="MF_00032"/>
    </source>
</evidence>
<sequence length="227" mass="24595">MIMKTYFSGVSTLGVHSLATEDYGFFPLSVDQKTMERMKNVLDIPATQLNISNSSLIGSLCVGNSNGLLVPNITTEKELELIKMFLKENSLDVNLERLKAKNTAFGNLILTNNKGCIISEELSRFRKTIEDVLDVESGVGNYAELPTVGSNGVATDKGCLVHPLTDELELEWIQDILRVDYVERGTANRGVTSVGACILANTKGAVVGGDTSGPEILKIEEALDLID</sequence>
<feature type="chain" id="PRO_0000153749" description="Translation initiation factor 6">
    <location>
        <begin position="1"/>
        <end position="227"/>
    </location>
</feature>
<comment type="function">
    <text evidence="1">Binds to the 50S ribosomal subunit and prevents its association with the 30S ribosomal subunit to form the 70S initiation complex.</text>
</comment>
<comment type="similarity">
    <text evidence="1">Belongs to the eIF-6 family.</text>
</comment>